<organism>
    <name type="scientific">Escherichia coli O157:H7</name>
    <dbReference type="NCBI Taxonomy" id="83334"/>
    <lineage>
        <taxon>Bacteria</taxon>
        <taxon>Pseudomonadati</taxon>
        <taxon>Pseudomonadota</taxon>
        <taxon>Gammaproteobacteria</taxon>
        <taxon>Enterobacterales</taxon>
        <taxon>Enterobacteriaceae</taxon>
        <taxon>Escherichia</taxon>
    </lineage>
</organism>
<proteinExistence type="inferred from homology"/>
<name>YJBB_ECO57</name>
<comment type="function">
    <text evidence="1">Might be involved in phosphate export.</text>
</comment>
<comment type="catalytic activity">
    <reaction evidence="1">
        <text>phosphate(in) = phosphate(out)</text>
        <dbReference type="Rhea" id="RHEA:32823"/>
        <dbReference type="ChEBI" id="CHEBI:43474"/>
    </reaction>
</comment>
<comment type="subcellular location">
    <subcellularLocation>
        <location evidence="3">Cell inner membrane</location>
        <topology evidence="2">Multi-pass membrane protein</topology>
    </subcellularLocation>
</comment>
<comment type="similarity">
    <text evidence="3">Belongs to the YjbB family.</text>
</comment>
<accession>Q8X5Z7</accession>
<accession>Q7A949</accession>
<dbReference type="EMBL" id="AE005174">
    <property type="protein sequence ID" value="AAG59212.1"/>
    <property type="molecule type" value="Genomic_DNA"/>
</dbReference>
<dbReference type="EMBL" id="BA000007">
    <property type="protein sequence ID" value="BAB38361.1"/>
    <property type="molecule type" value="Genomic_DNA"/>
</dbReference>
<dbReference type="PIR" id="B91246">
    <property type="entry name" value="B91246"/>
</dbReference>
<dbReference type="PIR" id="H86093">
    <property type="entry name" value="H86093"/>
</dbReference>
<dbReference type="RefSeq" id="NP_312965.1">
    <property type="nucleotide sequence ID" value="NC_002695.1"/>
</dbReference>
<dbReference type="RefSeq" id="WP_000956852.1">
    <property type="nucleotide sequence ID" value="NZ_VOAI01000027.1"/>
</dbReference>
<dbReference type="SMR" id="Q8X5Z7"/>
<dbReference type="STRING" id="155864.Z5611"/>
<dbReference type="GeneID" id="914841"/>
<dbReference type="KEGG" id="ece:Z5611"/>
<dbReference type="KEGG" id="ecs:ECs_4938"/>
<dbReference type="PATRIC" id="fig|386585.9.peg.5165"/>
<dbReference type="eggNOG" id="COG1283">
    <property type="taxonomic scope" value="Bacteria"/>
</dbReference>
<dbReference type="HOGENOM" id="CLU_025623_2_1_6"/>
<dbReference type="OMA" id="RINSHIC"/>
<dbReference type="Proteomes" id="UP000000558">
    <property type="component" value="Chromosome"/>
</dbReference>
<dbReference type="Proteomes" id="UP000002519">
    <property type="component" value="Chromosome"/>
</dbReference>
<dbReference type="GO" id="GO:0005886">
    <property type="term" value="C:plasma membrane"/>
    <property type="evidence" value="ECO:0007669"/>
    <property type="project" value="UniProtKB-SubCell"/>
</dbReference>
<dbReference type="GO" id="GO:0005436">
    <property type="term" value="F:sodium:phosphate symporter activity"/>
    <property type="evidence" value="ECO:0007669"/>
    <property type="project" value="InterPro"/>
</dbReference>
<dbReference type="GO" id="GO:0044341">
    <property type="term" value="P:sodium-dependent phosphate transport"/>
    <property type="evidence" value="ECO:0007669"/>
    <property type="project" value="InterPro"/>
</dbReference>
<dbReference type="FunFam" id="1.20.58.220:FF:000003">
    <property type="entry name" value="Inorganic phosphate transporter, sodium-dependent"/>
    <property type="match status" value="1"/>
</dbReference>
<dbReference type="Gene3D" id="1.20.58.220">
    <property type="entry name" value="Phosphate transport system protein phou homolog 2, domain 2"/>
    <property type="match status" value="1"/>
</dbReference>
<dbReference type="InterPro" id="IPR003841">
    <property type="entry name" value="Na/Pi_transpt"/>
</dbReference>
<dbReference type="InterPro" id="IPR004633">
    <property type="entry name" value="NaPi_cotrn-rel/YqeW-like"/>
</dbReference>
<dbReference type="InterPro" id="IPR038078">
    <property type="entry name" value="PhoU-like_sf"/>
</dbReference>
<dbReference type="NCBIfam" id="TIGR01013">
    <property type="entry name" value="2a58"/>
    <property type="match status" value="1"/>
</dbReference>
<dbReference type="NCBIfam" id="NF037997">
    <property type="entry name" value="Na_Pi_symport"/>
    <property type="match status" value="1"/>
</dbReference>
<dbReference type="NCBIfam" id="TIGR00704">
    <property type="entry name" value="NaPi_cotrn_rel"/>
    <property type="match status" value="1"/>
</dbReference>
<dbReference type="PANTHER" id="PTHR10010:SF39">
    <property type="entry name" value="PHOU DOMAIN-CONTAINING PROTEIN"/>
    <property type="match status" value="1"/>
</dbReference>
<dbReference type="PANTHER" id="PTHR10010">
    <property type="entry name" value="SOLUTE CARRIER FAMILY 34 SODIUM PHOSPHATE , MEMBER 2-RELATED"/>
    <property type="match status" value="1"/>
</dbReference>
<dbReference type="Pfam" id="PF02690">
    <property type="entry name" value="Na_Pi_cotrans"/>
    <property type="match status" value="1"/>
</dbReference>
<dbReference type="SUPFAM" id="SSF109755">
    <property type="entry name" value="PhoU-like"/>
    <property type="match status" value="1"/>
</dbReference>
<feature type="chain" id="PRO_0000232470" description="Putative inorganic phosphate export protein YjbB">
    <location>
        <begin position="1"/>
        <end position="543"/>
    </location>
</feature>
<feature type="transmembrane region" description="Helical" evidence="2">
    <location>
        <begin position="1"/>
        <end position="21"/>
    </location>
</feature>
<feature type="transmembrane region" description="Helical" evidence="2">
    <location>
        <begin position="48"/>
        <end position="68"/>
    </location>
</feature>
<feature type="transmembrane region" description="Helical" evidence="2">
    <location>
        <begin position="76"/>
        <end position="96"/>
    </location>
</feature>
<feature type="transmembrane region" description="Helical" evidence="2">
    <location>
        <begin position="99"/>
        <end position="119"/>
    </location>
</feature>
<feature type="transmembrane region" description="Helical" evidence="2">
    <location>
        <begin position="134"/>
        <end position="154"/>
    </location>
</feature>
<feature type="transmembrane region" description="Helical" evidence="2">
    <location>
        <begin position="175"/>
        <end position="195"/>
    </location>
</feature>
<feature type="transmembrane region" description="Helical" evidence="2">
    <location>
        <begin position="196"/>
        <end position="216"/>
    </location>
</feature>
<feature type="transmembrane region" description="Helical" evidence="2">
    <location>
        <begin position="240"/>
        <end position="260"/>
    </location>
</feature>
<feature type="transmembrane region" description="Helical" evidence="2">
    <location>
        <begin position="274"/>
        <end position="294"/>
    </location>
</feature>
<evidence type="ECO:0000250" key="1">
    <source>
        <dbReference type="UniProtKB" id="P0AF43"/>
    </source>
</evidence>
<evidence type="ECO:0000255" key="2"/>
<evidence type="ECO:0000305" key="3"/>
<reference key="1">
    <citation type="journal article" date="2001" name="Nature">
        <title>Genome sequence of enterohaemorrhagic Escherichia coli O157:H7.</title>
        <authorList>
            <person name="Perna N.T."/>
            <person name="Plunkett G. III"/>
            <person name="Burland V."/>
            <person name="Mau B."/>
            <person name="Glasner J.D."/>
            <person name="Rose D.J."/>
            <person name="Mayhew G.F."/>
            <person name="Evans P.S."/>
            <person name="Gregor J."/>
            <person name="Kirkpatrick H.A."/>
            <person name="Posfai G."/>
            <person name="Hackett J."/>
            <person name="Klink S."/>
            <person name="Boutin A."/>
            <person name="Shao Y."/>
            <person name="Miller L."/>
            <person name="Grotbeck E.J."/>
            <person name="Davis N.W."/>
            <person name="Lim A."/>
            <person name="Dimalanta E.T."/>
            <person name="Potamousis K."/>
            <person name="Apodaca J."/>
            <person name="Anantharaman T.S."/>
            <person name="Lin J."/>
            <person name="Yen G."/>
            <person name="Schwartz D.C."/>
            <person name="Welch R.A."/>
            <person name="Blattner F.R."/>
        </authorList>
    </citation>
    <scope>NUCLEOTIDE SEQUENCE [LARGE SCALE GENOMIC DNA]</scope>
    <source>
        <strain>O157:H7 / EDL933 / ATCC 700927 / EHEC</strain>
    </source>
</reference>
<reference key="2">
    <citation type="journal article" date="2001" name="DNA Res.">
        <title>Complete genome sequence of enterohemorrhagic Escherichia coli O157:H7 and genomic comparison with a laboratory strain K-12.</title>
        <authorList>
            <person name="Hayashi T."/>
            <person name="Makino K."/>
            <person name="Ohnishi M."/>
            <person name="Kurokawa K."/>
            <person name="Ishii K."/>
            <person name="Yokoyama K."/>
            <person name="Han C.-G."/>
            <person name="Ohtsubo E."/>
            <person name="Nakayama K."/>
            <person name="Murata T."/>
            <person name="Tanaka M."/>
            <person name="Tobe T."/>
            <person name="Iida T."/>
            <person name="Takami H."/>
            <person name="Honda T."/>
            <person name="Sasakawa C."/>
            <person name="Ogasawara N."/>
            <person name="Yasunaga T."/>
            <person name="Kuhara S."/>
            <person name="Shiba T."/>
            <person name="Hattori M."/>
            <person name="Shinagawa H."/>
        </authorList>
    </citation>
    <scope>NUCLEOTIDE SEQUENCE [LARGE SCALE GENOMIC DNA]</scope>
    <source>
        <strain>O157:H7 / Sakai / RIMD 0509952 / EHEC</strain>
    </source>
</reference>
<sequence length="543" mass="59446">MLTLLNLLSAVALLVWGTHIVRTGVMRVFGARLRTVLSRSVEKKPLAFCAGIGVTALVQSSNATTMLVTSFVAQDLVALAPALVIVLGADVGTALMARILTFDLSWLSPLLIFIGVIFFLGRKQSRAGQLGRVGIGLGLILLALELIVQAVTPITQANGVQVIFASLTGDILLDALIGAMFAIISYSSLAAVLLTATLTAAGIISFPVALCLVIGANLGSGLLAMLNNSAANAAARRVALGSLLFKLVGSLIILPFVHLLAETMGKLSLPKAELVIYFHVFYNLVRCLAMLPFVDPMARFCKTIIRDEPELDTQLRPKHLDVSALDTPTLALANAARETLRIGDAMEQMMEGLNKVMHGEPRQEKELRKLADDINVLYTAIKLYLARMPKEELAEEESRRWAEIIEMSLNLEQASDIVERMSSEIADKSLAARRAFSLDGLKELDALYEQLLSNLKLAMSVFFSGDVTSARRLRRSKHRFRILNRRYSHAHVDRLHQQNVQSIETSSLHLGLLGDMQRLNSLFCSVAYSVLEQPDEDEGRDEY</sequence>
<keyword id="KW-0997">Cell inner membrane</keyword>
<keyword id="KW-1003">Cell membrane</keyword>
<keyword id="KW-0472">Membrane</keyword>
<keyword id="KW-0592">Phosphate transport</keyword>
<keyword id="KW-1185">Reference proteome</keyword>
<keyword id="KW-0812">Transmembrane</keyword>
<keyword id="KW-1133">Transmembrane helix</keyword>
<keyword id="KW-0813">Transport</keyword>
<protein>
    <recommendedName>
        <fullName evidence="1">Putative inorganic phosphate export protein YjbB</fullName>
    </recommendedName>
</protein>
<gene>
    <name type="primary">yjbB</name>
    <name type="ordered locus">Z5611</name>
    <name type="ordered locus">ECs4938</name>
</gene>